<keyword id="KW-1283">Bacterial microcompartment</keyword>
<keyword id="KW-0120">Carbon dioxide fixation</keyword>
<keyword id="KW-1282">Carboxysome</keyword>
<keyword id="KW-0602">Photosynthesis</keyword>
<keyword id="KW-1185">Reference proteome</keyword>
<proteinExistence type="evidence at protein level"/>
<reference key="1">
    <citation type="journal article" date="2013" name="Proc. Natl. Acad. Sci. U.S.A.">
        <title>Improving the coverage of the cyanobacterial phylum using diversity-driven genome sequencing.</title>
        <authorList>
            <person name="Shih P.M."/>
            <person name="Wu D."/>
            <person name="Latifi A."/>
            <person name="Axen S.D."/>
            <person name="Fewer D.P."/>
            <person name="Talla E."/>
            <person name="Calteau A."/>
            <person name="Cai F."/>
            <person name="Tandeau de Marsac N."/>
            <person name="Rippka R."/>
            <person name="Herdman M."/>
            <person name="Sivonen K."/>
            <person name="Coursin T."/>
            <person name="Laurent T."/>
            <person name="Goodwin L."/>
            <person name="Nolan M."/>
            <person name="Davenport K.W."/>
            <person name="Han C.S."/>
            <person name="Rubin E.M."/>
            <person name="Eisen J.A."/>
            <person name="Woyke T."/>
            <person name="Gugger M."/>
            <person name="Kerfeld C.A."/>
        </authorList>
    </citation>
    <scope>NUCLEOTIDE SEQUENCE [LARGE SCALE GENOMIC DNA]</scope>
    <source>
        <strain>PCC 7418</strain>
    </source>
</reference>
<reference key="2">
    <citation type="journal article" date="2019" name="Plant Physiol.">
        <title>Heterohexamers Formed by CcmK3 and CcmK4 Increase the Complexity of Beta Carboxysome Shells.</title>
        <authorList>
            <person name="Sommer M."/>
            <person name="Sutter M."/>
            <person name="Gupta S."/>
            <person name="Kirst H."/>
            <person name="Turmo A."/>
            <person name="Lechno-Yossef S."/>
            <person name="Burton R.L."/>
            <person name="Saechao C."/>
            <person name="Sloan N.B."/>
            <person name="Cheng X."/>
            <person name="Chan L.G."/>
            <person name="Petzold C.J."/>
            <person name="Fuentes-Cabrera M."/>
            <person name="Ralston C.Y."/>
            <person name="Kerfeld C.A."/>
        </authorList>
    </citation>
    <scope>FUNCTION</scope>
    <scope>SUBCELLULAR LOCATION</scope>
    <scope>SUBUNIT</scope>
    <source>
        <strain>PCC 7418</strain>
    </source>
</reference>
<name>CCMK3_HALP7</name>
<gene>
    <name evidence="3" type="primary">ccmK3</name>
    <name type="ordered locus">PCC7418_0348</name>
</gene>
<evidence type="ECO:0000255" key="1">
    <source>
        <dbReference type="HAMAP-Rule" id="MF_00854"/>
    </source>
</evidence>
<evidence type="ECO:0000269" key="2">
    <source>
    </source>
</evidence>
<evidence type="ECO:0000303" key="3">
    <source>
    </source>
</evidence>
<evidence type="ECO:0000305" key="4"/>
<evidence type="ECO:0000305" key="5">
    <source>
    </source>
</evidence>
<organism>
    <name type="scientific">Halothece sp. (strain PCC 7418)</name>
    <name type="common">Synechococcus sp. (strain PCC 7418)</name>
    <dbReference type="NCBI Taxonomy" id="65093"/>
    <lineage>
        <taxon>Bacteria</taxon>
        <taxon>Bacillati</taxon>
        <taxon>Cyanobacteriota</taxon>
        <taxon>Cyanophyceae</taxon>
        <taxon>Oscillatoriophycideae</taxon>
        <taxon>Chroococcales</taxon>
        <taxon>Halothecacae</taxon>
        <taxon>Halothece cluster</taxon>
        <taxon>Halothece</taxon>
    </lineage>
</organism>
<feature type="chain" id="PRO_0000451237" description="Carboxysome shell protein CcmK3">
    <location>
        <begin position="1"/>
        <end position="102"/>
    </location>
</feature>
<feature type="domain" description="BMC" evidence="1">
    <location>
        <begin position="4"/>
        <end position="90"/>
    </location>
</feature>
<comment type="function">
    <text evidence="2">A probably non-essential, minor shell protein of the carboxysome, a polyhedral inclusion where RuBisCO (ribulose bisphosphate carboxylase, rbcL-rbcS) is sequestered. Hexamers form sheets that form the facets of the polyhedral carboxysome. In PCC 7418 there are several CcmK paralogs with presumably functional differences. This subunit probably only makes heterohexamers with CcmK4. Heterohexamers can also make dodecamers, formation depends on buffer conditions.</text>
</comment>
<comment type="subunit">
    <text evidence="2">Interacts stably with CcmK4, forming heterohexamers that can make dodecamers. Heterohexamers have a 1:2 CcmK3:CcmK4 stoichiometry. Upon expression in E.coli forms oligomers that could be dimers or trimers, but never hexamers; bulky residues in the pore region probably preclude the formation of homohexamers.</text>
</comment>
<comment type="subcellular location">
    <subcellularLocation>
        <location evidence="1 5">Carboxysome</location>
    </subcellularLocation>
    <text evidence="4">This cyanobacterium makes beta-type carboxysomes.</text>
</comment>
<comment type="similarity">
    <text evidence="1">Belongs to the bacterial microcompartments protein family. CcmK subfamily.</text>
</comment>
<accession>K9Y7V9</accession>
<dbReference type="EMBL" id="CP003945">
    <property type="protein sequence ID" value="AFZ42582.1"/>
    <property type="molecule type" value="Genomic_DNA"/>
</dbReference>
<dbReference type="RefSeq" id="WP_015224460.1">
    <property type="nucleotide sequence ID" value="NC_019779.1"/>
</dbReference>
<dbReference type="SMR" id="K9Y7V9"/>
<dbReference type="STRING" id="65093.PCC7418_0348"/>
<dbReference type="KEGG" id="hao:PCC7418_0348"/>
<dbReference type="PATRIC" id="fig|65093.3.peg.364"/>
<dbReference type="eggNOG" id="COG4577">
    <property type="taxonomic scope" value="Bacteria"/>
</dbReference>
<dbReference type="HOGENOM" id="CLU_064903_5_0_3"/>
<dbReference type="OrthoDB" id="7057533at2"/>
<dbReference type="Proteomes" id="UP000010481">
    <property type="component" value="Chromosome"/>
</dbReference>
<dbReference type="GO" id="GO:0031470">
    <property type="term" value="C:carboxysome"/>
    <property type="evidence" value="ECO:0007669"/>
    <property type="project" value="UniProtKB-SubCell"/>
</dbReference>
<dbReference type="GO" id="GO:0043886">
    <property type="term" value="F:structural constituent of carboxysome shell"/>
    <property type="evidence" value="ECO:0007669"/>
    <property type="project" value="UniProtKB-UniRule"/>
</dbReference>
<dbReference type="GO" id="GO:0015977">
    <property type="term" value="P:carbon fixation"/>
    <property type="evidence" value="ECO:0007669"/>
    <property type="project" value="UniProtKB-UniRule"/>
</dbReference>
<dbReference type="GO" id="GO:0015979">
    <property type="term" value="P:photosynthesis"/>
    <property type="evidence" value="ECO:0007669"/>
    <property type="project" value="UniProtKB-KW"/>
</dbReference>
<dbReference type="Gene3D" id="3.30.70.1710">
    <property type="match status" value="1"/>
</dbReference>
<dbReference type="HAMAP" id="MF_00854">
    <property type="entry name" value="CcmK"/>
    <property type="match status" value="1"/>
</dbReference>
<dbReference type="InterPro" id="IPR020808">
    <property type="entry name" value="Bact_microcomp_CS"/>
</dbReference>
<dbReference type="InterPro" id="IPR000249">
    <property type="entry name" value="BMC_dom"/>
</dbReference>
<dbReference type="InterPro" id="IPR050575">
    <property type="entry name" value="BMC_shell"/>
</dbReference>
<dbReference type="InterPro" id="IPR046380">
    <property type="entry name" value="CcmK"/>
</dbReference>
<dbReference type="InterPro" id="IPR037233">
    <property type="entry name" value="CcmK-like_sf"/>
</dbReference>
<dbReference type="InterPro" id="IPR044872">
    <property type="entry name" value="CcmK/CsoS1_BMC"/>
</dbReference>
<dbReference type="PANTHER" id="PTHR33941:SF13">
    <property type="entry name" value="CARBOXYSOME SHELL PROTEIN CCMK4"/>
    <property type="match status" value="1"/>
</dbReference>
<dbReference type="PANTHER" id="PTHR33941">
    <property type="entry name" value="PROPANEDIOL UTILIZATION PROTEIN PDUA"/>
    <property type="match status" value="1"/>
</dbReference>
<dbReference type="Pfam" id="PF00936">
    <property type="entry name" value="BMC"/>
    <property type="match status" value="1"/>
</dbReference>
<dbReference type="SMART" id="SM00877">
    <property type="entry name" value="BMC"/>
    <property type="match status" value="1"/>
</dbReference>
<dbReference type="SUPFAM" id="SSF143414">
    <property type="entry name" value="CcmK-like"/>
    <property type="match status" value="1"/>
</dbReference>
<dbReference type="PROSITE" id="PS01139">
    <property type="entry name" value="BMC_1"/>
    <property type="match status" value="1"/>
</dbReference>
<dbReference type="PROSITE" id="PS51930">
    <property type="entry name" value="BMC_2"/>
    <property type="match status" value="1"/>
</dbReference>
<protein>
    <recommendedName>
        <fullName evidence="3">Carboxysome shell protein CcmK3</fullName>
    </recommendedName>
    <alternativeName>
        <fullName evidence="1">Carbon dioxide-concentrating mechanism protein CcmK3</fullName>
    </alternativeName>
</protein>
<sequence>MPVAVGVIQTDGFPAVLAAADAMVKAASVTLVSFDKAERAQFYVAVRGPVSEVERSMEAGIAAAEETYNGTVITHYMIPNPPDNVETVMPIAYSDEVEPFRV</sequence>